<proteinExistence type="evidence at transcript level"/>
<reference key="1">
    <citation type="submission" date="2003-08" db="EMBL/GenBank/DDBJ databases">
        <title>Cloning and characterization of canine myostatin (MSTN).</title>
        <authorList>
            <person name="Perkins K.J."/>
            <person name="Khurana T.S."/>
        </authorList>
    </citation>
    <scope>NUCLEOTIDE SEQUENCE [MRNA]</scope>
</reference>
<feature type="signal peptide" evidence="3">
    <location>
        <begin position="1"/>
        <end position="18"/>
    </location>
</feature>
<feature type="propeptide" id="PRO_0000033940" evidence="3">
    <location>
        <begin position="19"/>
        <end position="266"/>
    </location>
</feature>
<feature type="chain" id="PRO_0000033941" description="Growth/differentiation factor 8">
    <location>
        <begin position="267"/>
        <end position="375"/>
    </location>
</feature>
<feature type="site" description="Cleavage" evidence="1">
    <location>
        <begin position="98"/>
        <end position="99"/>
    </location>
</feature>
<feature type="glycosylation site" description="N-linked (GlcNAc...) asparagine" evidence="3">
    <location>
        <position position="71"/>
    </location>
</feature>
<feature type="disulfide bond" evidence="2">
    <location>
        <begin position="272"/>
        <end position="282"/>
    </location>
</feature>
<feature type="disulfide bond" evidence="2">
    <location>
        <begin position="281"/>
        <end position="340"/>
    </location>
</feature>
<feature type="disulfide bond" evidence="2">
    <location>
        <begin position="309"/>
        <end position="372"/>
    </location>
</feature>
<feature type="disulfide bond" evidence="2">
    <location>
        <begin position="313"/>
        <end position="374"/>
    </location>
</feature>
<feature type="disulfide bond" description="Interchain" evidence="2">
    <location>
        <position position="339"/>
    </location>
</feature>
<protein>
    <recommendedName>
        <fullName>Growth/differentiation factor 8</fullName>
        <shortName>GDF-8</shortName>
    </recommendedName>
    <alternativeName>
        <fullName>Myostatin</fullName>
    </alternativeName>
</protein>
<organism>
    <name type="scientific">Canis lupus familiaris</name>
    <name type="common">Dog</name>
    <name type="synonym">Canis familiaris</name>
    <dbReference type="NCBI Taxonomy" id="9615"/>
    <lineage>
        <taxon>Eukaryota</taxon>
        <taxon>Metazoa</taxon>
        <taxon>Chordata</taxon>
        <taxon>Craniata</taxon>
        <taxon>Vertebrata</taxon>
        <taxon>Euteleostomi</taxon>
        <taxon>Mammalia</taxon>
        <taxon>Eutheria</taxon>
        <taxon>Laurasiatheria</taxon>
        <taxon>Carnivora</taxon>
        <taxon>Caniformia</taxon>
        <taxon>Canidae</taxon>
        <taxon>Canis</taxon>
    </lineage>
</organism>
<name>GDF8_CANLF</name>
<evidence type="ECO:0000250" key="1">
    <source>
        <dbReference type="UniProtKB" id="O08689"/>
    </source>
</evidence>
<evidence type="ECO:0000250" key="2">
    <source>
        <dbReference type="UniProtKB" id="O14793"/>
    </source>
</evidence>
<evidence type="ECO:0000255" key="3"/>
<evidence type="ECO:0000305" key="4"/>
<comment type="function">
    <text evidence="1">Acts specifically as a negative regulator of skeletal muscle growth.</text>
</comment>
<comment type="subunit">
    <text evidence="1">Homodimer; disulfide-linked. Interacts with WFIKKN2, leading to inhibit its activity. Interacts with FSTL3.</text>
</comment>
<comment type="subcellular location">
    <subcellularLocation>
        <location evidence="1">Secreted</location>
    </subcellularLocation>
</comment>
<comment type="PTM">
    <text evidence="1">Synthesized as large precursor molecule that undergoes proteolytic cleavage to generate an N-terminal propeptide and a disulfide linked C-terminal dimer, which is the biologically active molecule. The circulating form consists of a latent complex of the C-terminal dimer and other proteins, including its propeptide, which maintain the C-terminal dimer in a latent, inactive state. Ligand activation requires additional cleavage of the prodomain by a tolloid-like metalloproteinase.</text>
</comment>
<comment type="similarity">
    <text evidence="4">Belongs to the TGF-beta family.</text>
</comment>
<dbReference type="EMBL" id="AY367768">
    <property type="protein sequence ID" value="AAR14343.1"/>
    <property type="molecule type" value="mRNA"/>
</dbReference>
<dbReference type="RefSeq" id="NP_001002959.1">
    <property type="nucleotide sequence ID" value="NM_001002959.1"/>
</dbReference>
<dbReference type="SMR" id="Q6UKZ8"/>
<dbReference type="FunCoup" id="Q6UKZ8">
    <property type="interactions" value="312"/>
</dbReference>
<dbReference type="STRING" id="9615.ENSCAFP00000013840"/>
<dbReference type="GlyCosmos" id="Q6UKZ8">
    <property type="glycosylation" value="1 site, No reported glycans"/>
</dbReference>
<dbReference type="PaxDb" id="9612-ENSCAFP00000013840"/>
<dbReference type="Ensembl" id="ENSCAFT00000014953.4">
    <property type="protein sequence ID" value="ENSCAFP00000013840.2"/>
    <property type="gene ID" value="ENSCAFG00000009398.4"/>
</dbReference>
<dbReference type="Ensembl" id="ENSCAFT00030029259.1">
    <property type="protein sequence ID" value="ENSCAFP00030025505.1"/>
    <property type="gene ID" value="ENSCAFG00030015890.1"/>
</dbReference>
<dbReference type="Ensembl" id="ENSCAFT00040024330.1">
    <property type="protein sequence ID" value="ENSCAFP00040021141.1"/>
    <property type="gene ID" value="ENSCAFG00040013173.1"/>
</dbReference>
<dbReference type="Ensembl" id="ENSCAFT00845043176.1">
    <property type="protein sequence ID" value="ENSCAFP00845033852.1"/>
    <property type="gene ID" value="ENSCAFG00845024446.1"/>
</dbReference>
<dbReference type="GeneID" id="403433"/>
<dbReference type="KEGG" id="cfa:403433"/>
<dbReference type="CTD" id="2660"/>
<dbReference type="VEuPathDB" id="HostDB:ENSCAFG00845024446"/>
<dbReference type="VGNC" id="VGNC:43453">
    <property type="gene designation" value="MSTN"/>
</dbReference>
<dbReference type="eggNOG" id="KOG3900">
    <property type="taxonomic scope" value="Eukaryota"/>
</dbReference>
<dbReference type="GeneTree" id="ENSGT00940000160657"/>
<dbReference type="HOGENOM" id="CLU_020515_6_1_1"/>
<dbReference type="InParanoid" id="Q6UKZ8"/>
<dbReference type="OMA" id="CNACMWR"/>
<dbReference type="OrthoDB" id="5948587at2759"/>
<dbReference type="TreeFam" id="TF318514"/>
<dbReference type="Proteomes" id="UP000002254">
    <property type="component" value="Chromosome 37"/>
</dbReference>
<dbReference type="Proteomes" id="UP000694429">
    <property type="component" value="Chromosome 37"/>
</dbReference>
<dbReference type="Proteomes" id="UP000694542">
    <property type="component" value="Chromosome 37"/>
</dbReference>
<dbReference type="Proteomes" id="UP000805418">
    <property type="component" value="Chromosome 37"/>
</dbReference>
<dbReference type="Bgee" id="ENSCAFG00000009398">
    <property type="expression patterns" value="Expressed in smooth muscle tissue and 24 other cell types or tissues"/>
</dbReference>
<dbReference type="GO" id="GO:0005615">
    <property type="term" value="C:extracellular space"/>
    <property type="evidence" value="ECO:0000318"/>
    <property type="project" value="GO_Central"/>
</dbReference>
<dbReference type="GO" id="GO:0005125">
    <property type="term" value="F:cytokine activity"/>
    <property type="evidence" value="ECO:0000318"/>
    <property type="project" value="GO_Central"/>
</dbReference>
<dbReference type="GO" id="GO:0008083">
    <property type="term" value="F:growth factor activity"/>
    <property type="evidence" value="ECO:0007669"/>
    <property type="project" value="UniProtKB-KW"/>
</dbReference>
<dbReference type="GO" id="GO:0008201">
    <property type="term" value="F:heparin binding"/>
    <property type="evidence" value="ECO:0007669"/>
    <property type="project" value="UniProtKB-KW"/>
</dbReference>
<dbReference type="GO" id="GO:0042802">
    <property type="term" value="F:identical protein binding"/>
    <property type="evidence" value="ECO:0000250"/>
    <property type="project" value="UniProtKB"/>
</dbReference>
<dbReference type="GO" id="GO:0042803">
    <property type="term" value="F:protein homodimerization activity"/>
    <property type="evidence" value="ECO:0007669"/>
    <property type="project" value="Ensembl"/>
</dbReference>
<dbReference type="GO" id="GO:0043539">
    <property type="term" value="F:protein serine/threonine kinase activator activity"/>
    <property type="evidence" value="ECO:0007669"/>
    <property type="project" value="Ensembl"/>
</dbReference>
<dbReference type="GO" id="GO:0071549">
    <property type="term" value="P:cellular response to dexamethasone stimulus"/>
    <property type="evidence" value="ECO:0007669"/>
    <property type="project" value="Ensembl"/>
</dbReference>
<dbReference type="GO" id="GO:0046716">
    <property type="term" value="P:muscle cell cellular homeostasis"/>
    <property type="evidence" value="ECO:0007669"/>
    <property type="project" value="Ensembl"/>
</dbReference>
<dbReference type="GO" id="GO:0014839">
    <property type="term" value="P:myoblast migration involved in skeletal muscle regeneration"/>
    <property type="evidence" value="ECO:0000250"/>
    <property type="project" value="UniProtKB"/>
</dbReference>
<dbReference type="GO" id="GO:0046627">
    <property type="term" value="P:negative regulation of insulin receptor signaling pathway"/>
    <property type="evidence" value="ECO:0007669"/>
    <property type="project" value="Ensembl"/>
</dbReference>
<dbReference type="GO" id="GO:0045662">
    <property type="term" value="P:negative regulation of myoblast differentiation"/>
    <property type="evidence" value="ECO:0007669"/>
    <property type="project" value="Ensembl"/>
</dbReference>
<dbReference type="GO" id="GO:2000818">
    <property type="term" value="P:negative regulation of myoblast proliferation"/>
    <property type="evidence" value="ECO:0000250"/>
    <property type="project" value="AgBase"/>
</dbReference>
<dbReference type="GO" id="GO:0051898">
    <property type="term" value="P:negative regulation of phosphatidylinositol 3-kinase/protein kinase B signal transduction"/>
    <property type="evidence" value="ECO:0007669"/>
    <property type="project" value="Ensembl"/>
</dbReference>
<dbReference type="GO" id="GO:1902725">
    <property type="term" value="P:negative regulation of satellite cell differentiation"/>
    <property type="evidence" value="ECO:0000250"/>
    <property type="project" value="AgBase"/>
</dbReference>
<dbReference type="GO" id="GO:1902723">
    <property type="term" value="P:negative regulation of skeletal muscle satellite cell proliferation"/>
    <property type="evidence" value="ECO:0000250"/>
    <property type="project" value="AgBase"/>
</dbReference>
<dbReference type="GO" id="GO:0048632">
    <property type="term" value="P:negative regulation of skeletal muscle tissue growth"/>
    <property type="evidence" value="ECO:0007669"/>
    <property type="project" value="Ensembl"/>
</dbReference>
<dbReference type="GO" id="GO:0045893">
    <property type="term" value="P:positive regulation of DNA-templated transcription"/>
    <property type="evidence" value="ECO:0007669"/>
    <property type="project" value="Ensembl"/>
</dbReference>
<dbReference type="GO" id="GO:0010592">
    <property type="term" value="P:positive regulation of lamellipodium assembly"/>
    <property type="evidence" value="ECO:0000250"/>
    <property type="project" value="UniProtKB"/>
</dbReference>
<dbReference type="GO" id="GO:0010759">
    <property type="term" value="P:positive regulation of macrophage chemotaxis"/>
    <property type="evidence" value="ECO:0000250"/>
    <property type="project" value="UniProtKB"/>
</dbReference>
<dbReference type="GO" id="GO:0014816">
    <property type="term" value="P:skeletal muscle satellite cell differentiation"/>
    <property type="evidence" value="ECO:0007669"/>
    <property type="project" value="Ensembl"/>
</dbReference>
<dbReference type="GO" id="GO:0007179">
    <property type="term" value="P:transforming growth factor beta receptor signaling pathway"/>
    <property type="evidence" value="ECO:0007669"/>
    <property type="project" value="Ensembl"/>
</dbReference>
<dbReference type="CDD" id="cd19388">
    <property type="entry name" value="TGF_beta_GDF8"/>
    <property type="match status" value="1"/>
</dbReference>
<dbReference type="FunFam" id="2.60.120.970:FF:000001">
    <property type="entry name" value="Growth/differentiation factor 8"/>
    <property type="match status" value="1"/>
</dbReference>
<dbReference type="FunFam" id="2.10.90.10:FF:000006">
    <property type="entry name" value="growth/differentiation factor 8"/>
    <property type="match status" value="1"/>
</dbReference>
<dbReference type="Gene3D" id="2.60.120.970">
    <property type="match status" value="1"/>
</dbReference>
<dbReference type="Gene3D" id="2.10.90.10">
    <property type="entry name" value="Cystine-knot cytokines"/>
    <property type="match status" value="1"/>
</dbReference>
<dbReference type="InterPro" id="IPR029034">
    <property type="entry name" value="Cystine-knot_cytokine"/>
</dbReference>
<dbReference type="InterPro" id="IPR001839">
    <property type="entry name" value="TGF-b_C"/>
</dbReference>
<dbReference type="InterPro" id="IPR001111">
    <property type="entry name" value="TGF-b_propeptide"/>
</dbReference>
<dbReference type="InterPro" id="IPR015615">
    <property type="entry name" value="TGF-beta-rel"/>
</dbReference>
<dbReference type="InterPro" id="IPR017948">
    <property type="entry name" value="TGFb_CS"/>
</dbReference>
<dbReference type="PANTHER" id="PTHR11848:SF150">
    <property type="entry name" value="GROWTH_DIFFERENTIATION FACTOR 8"/>
    <property type="match status" value="1"/>
</dbReference>
<dbReference type="PANTHER" id="PTHR11848">
    <property type="entry name" value="TGF-BETA FAMILY"/>
    <property type="match status" value="1"/>
</dbReference>
<dbReference type="Pfam" id="PF00019">
    <property type="entry name" value="TGF_beta"/>
    <property type="match status" value="1"/>
</dbReference>
<dbReference type="Pfam" id="PF00688">
    <property type="entry name" value="TGFb_propeptide"/>
    <property type="match status" value="1"/>
</dbReference>
<dbReference type="SMART" id="SM00204">
    <property type="entry name" value="TGFB"/>
    <property type="match status" value="1"/>
</dbReference>
<dbReference type="SUPFAM" id="SSF57501">
    <property type="entry name" value="Cystine-knot cytokines"/>
    <property type="match status" value="1"/>
</dbReference>
<dbReference type="PROSITE" id="PS00250">
    <property type="entry name" value="TGF_BETA_1"/>
    <property type="match status" value="1"/>
</dbReference>
<dbReference type="PROSITE" id="PS51362">
    <property type="entry name" value="TGF_BETA_2"/>
    <property type="match status" value="1"/>
</dbReference>
<gene>
    <name type="primary">MSTN</name>
    <name type="synonym">GDF8</name>
</gene>
<keyword id="KW-0165">Cleavage on pair of basic residues</keyword>
<keyword id="KW-0202">Cytokine</keyword>
<keyword id="KW-1015">Disulfide bond</keyword>
<keyword id="KW-0325">Glycoprotein</keyword>
<keyword id="KW-0339">Growth factor</keyword>
<keyword id="KW-0358">Heparin-binding</keyword>
<keyword id="KW-1185">Reference proteome</keyword>
<keyword id="KW-0964">Secreted</keyword>
<keyword id="KW-0732">Signal</keyword>
<accession>Q6UKZ8</accession>
<sequence>MQRLQICVYIYLFVLIVAGPVDLSENSEQKENVEKEGLCNACMWRQNTKSSRIEAIKIQILSKLRLETAPNISRDAVRQLLPRAPPLRELIDQYDVQRDDSSDGSLEDDDYHATTETVIAMPAETDLLMQVEGKPKCCFFKFSSKIQYNKVVKAQLWIYLRPVKTPTTVFVQILRLIKPMKDGTRYTGIRSLKLDMNPGTGIWQSIDVKTVLQNWLKQPESNLGIEIKALDENGHDLAVTFPGPGEDGLNPFLEVKVTDTPKRSRRDFGLDCDEHSTESRCCRYPLTVDFEAFGWDWIIAPKRYKANYCSGECEFVFLQKYPHTHLVHQANPRGSAGPCCTPTKMSPINMLYFNGKEQIIYGKIPAMVVDRCGCS</sequence>